<reference key="1">
    <citation type="journal article" date="1995" name="Science">
        <title>Whole-genome random sequencing and assembly of Haemophilus influenzae Rd.</title>
        <authorList>
            <person name="Fleischmann R.D."/>
            <person name="Adams M.D."/>
            <person name="White O."/>
            <person name="Clayton R.A."/>
            <person name="Kirkness E.F."/>
            <person name="Kerlavage A.R."/>
            <person name="Bult C.J."/>
            <person name="Tomb J.-F."/>
            <person name="Dougherty B.A."/>
            <person name="Merrick J.M."/>
            <person name="McKenney K."/>
            <person name="Sutton G.G."/>
            <person name="FitzHugh W."/>
            <person name="Fields C.A."/>
            <person name="Gocayne J.D."/>
            <person name="Scott J.D."/>
            <person name="Shirley R."/>
            <person name="Liu L.-I."/>
            <person name="Glodek A."/>
            <person name="Kelley J.M."/>
            <person name="Weidman J.F."/>
            <person name="Phillips C.A."/>
            <person name="Spriggs T."/>
            <person name="Hedblom E."/>
            <person name="Cotton M.D."/>
            <person name="Utterback T.R."/>
            <person name="Hanna M.C."/>
            <person name="Nguyen D.T."/>
            <person name="Saudek D.M."/>
            <person name="Brandon R.C."/>
            <person name="Fine L.D."/>
            <person name="Fritchman J.L."/>
            <person name="Fuhrmann J.L."/>
            <person name="Geoghagen N.S.M."/>
            <person name="Gnehm C.L."/>
            <person name="McDonald L.A."/>
            <person name="Small K.V."/>
            <person name="Fraser C.M."/>
            <person name="Smith H.O."/>
            <person name="Venter J.C."/>
        </authorList>
    </citation>
    <scope>NUCLEOTIDE SEQUENCE [LARGE SCALE GENOMIC DNA]</scope>
    <source>
        <strain>ATCC 51907 / DSM 11121 / KW20 / Rd</strain>
    </source>
</reference>
<sequence>MIDILDVKSRATIQDLGRFGLRRFGISHCGAMDKLALRAGNILLGNAENVPAIEVPLGGITLQFQQDMNFCVTGAFYEMMLDDKPVFAYWRYQVRAGQILKMARAKIGMYGYLCVQGGFVLPQALNSCSTDLRAQIGGIEGRCLQAGDQLQTANDHILRSEIGIAPIPLRDVIRALPSSEYQAFKRKSQYYWWRNEWTLQSNSDRMGYRFQGQTLELKQPLEMLSHAIQFGSVQVPPSGQPIILMADAQTTGGYPKIANVIDADLGALAQVRLGSTIKFEAVSLQEAAKLRRKNEIYLDQIRRIVDEKN</sequence>
<name>PXPC_HAEIN</name>
<gene>
    <name evidence="1" type="primary">pxpC</name>
    <name type="ordered locus">HI_1730</name>
</gene>
<feature type="chain" id="PRO_0000168710" description="5-oxoprolinase subunit C">
    <location>
        <begin position="1"/>
        <end position="309"/>
    </location>
</feature>
<protein>
    <recommendedName>
        <fullName evidence="1">5-oxoprolinase subunit C</fullName>
        <shortName evidence="1">5-OPase subunit C</shortName>
        <ecNumber evidence="1">3.5.2.9</ecNumber>
    </recommendedName>
    <alternativeName>
        <fullName evidence="1">5-oxoprolinase (ATP-hydrolyzing) subunit C</fullName>
    </alternativeName>
</protein>
<organism>
    <name type="scientific">Haemophilus influenzae (strain ATCC 51907 / DSM 11121 / KW20 / Rd)</name>
    <dbReference type="NCBI Taxonomy" id="71421"/>
    <lineage>
        <taxon>Bacteria</taxon>
        <taxon>Pseudomonadati</taxon>
        <taxon>Pseudomonadota</taxon>
        <taxon>Gammaproteobacteria</taxon>
        <taxon>Pasteurellales</taxon>
        <taxon>Pasteurellaceae</taxon>
        <taxon>Haemophilus</taxon>
    </lineage>
</organism>
<comment type="function">
    <text evidence="1">Catalyzes the cleavage of 5-oxoproline to form L-glutamate coupled to the hydrolysis of ATP to ADP and inorganic phosphate.</text>
</comment>
<comment type="catalytic activity">
    <reaction evidence="1">
        <text>5-oxo-L-proline + ATP + 2 H2O = L-glutamate + ADP + phosphate + H(+)</text>
        <dbReference type="Rhea" id="RHEA:10348"/>
        <dbReference type="ChEBI" id="CHEBI:15377"/>
        <dbReference type="ChEBI" id="CHEBI:15378"/>
        <dbReference type="ChEBI" id="CHEBI:29985"/>
        <dbReference type="ChEBI" id="CHEBI:30616"/>
        <dbReference type="ChEBI" id="CHEBI:43474"/>
        <dbReference type="ChEBI" id="CHEBI:58402"/>
        <dbReference type="ChEBI" id="CHEBI:456216"/>
        <dbReference type="EC" id="3.5.2.9"/>
    </reaction>
</comment>
<comment type="subunit">
    <text evidence="2">Forms a complex composed of PxpA, PxpB and PxpC.</text>
</comment>
<comment type="similarity">
    <text evidence="3">Belongs to the PxpC family.</text>
</comment>
<keyword id="KW-0067">ATP-binding</keyword>
<keyword id="KW-0378">Hydrolase</keyword>
<keyword id="KW-0547">Nucleotide-binding</keyword>
<keyword id="KW-1185">Reference proteome</keyword>
<accession>P44298</accession>
<dbReference type="EC" id="3.5.2.9" evidence="1"/>
<dbReference type="EMBL" id="L42023">
    <property type="protein sequence ID" value="AAC23376.1"/>
    <property type="molecule type" value="Genomic_DNA"/>
</dbReference>
<dbReference type="PIR" id="B64041">
    <property type="entry name" value="B64041"/>
</dbReference>
<dbReference type="RefSeq" id="NP_439871.1">
    <property type="nucleotide sequence ID" value="NC_000907.1"/>
</dbReference>
<dbReference type="SMR" id="P44298"/>
<dbReference type="STRING" id="71421.HI_1730"/>
<dbReference type="EnsemblBacteria" id="AAC23376">
    <property type="protein sequence ID" value="AAC23376"/>
    <property type="gene ID" value="HI_1730"/>
</dbReference>
<dbReference type="KEGG" id="hin:HI_1730"/>
<dbReference type="PATRIC" id="fig|71421.8.peg.1809"/>
<dbReference type="eggNOG" id="COG1984">
    <property type="taxonomic scope" value="Bacteria"/>
</dbReference>
<dbReference type="HOGENOM" id="CLU_028967_0_3_6"/>
<dbReference type="OrthoDB" id="9768696at2"/>
<dbReference type="PhylomeDB" id="P44298"/>
<dbReference type="BioCyc" id="HINF71421:G1GJ1-1745-MONOMER"/>
<dbReference type="Proteomes" id="UP000000579">
    <property type="component" value="Chromosome"/>
</dbReference>
<dbReference type="GO" id="GO:0017168">
    <property type="term" value="F:5-oxoprolinase (ATP-hydrolyzing) activity"/>
    <property type="evidence" value="ECO:0007669"/>
    <property type="project" value="UniProtKB-EC"/>
</dbReference>
<dbReference type="GO" id="GO:0005524">
    <property type="term" value="F:ATP binding"/>
    <property type="evidence" value="ECO:0007669"/>
    <property type="project" value="UniProtKB-KW"/>
</dbReference>
<dbReference type="Gene3D" id="2.40.100.10">
    <property type="entry name" value="Cyclophilin-like"/>
    <property type="match status" value="1"/>
</dbReference>
<dbReference type="InterPro" id="IPR003778">
    <property type="entry name" value="CT_A_B"/>
</dbReference>
<dbReference type="InterPro" id="IPR029000">
    <property type="entry name" value="Cyclophilin-like_dom_sf"/>
</dbReference>
<dbReference type="InterPro" id="IPR052708">
    <property type="entry name" value="PxpC"/>
</dbReference>
<dbReference type="NCBIfam" id="TIGR00724">
    <property type="entry name" value="urea_amlyse_rel"/>
    <property type="match status" value="1"/>
</dbReference>
<dbReference type="PANTHER" id="PTHR43309">
    <property type="entry name" value="5-OXOPROLINASE SUBUNIT C"/>
    <property type="match status" value="1"/>
</dbReference>
<dbReference type="PANTHER" id="PTHR43309:SF3">
    <property type="entry name" value="5-OXOPROLINASE SUBUNIT C"/>
    <property type="match status" value="1"/>
</dbReference>
<dbReference type="Pfam" id="PF02626">
    <property type="entry name" value="CT_A_B"/>
    <property type="match status" value="1"/>
</dbReference>
<dbReference type="SMART" id="SM00797">
    <property type="entry name" value="AHS2"/>
    <property type="match status" value="1"/>
</dbReference>
<dbReference type="SUPFAM" id="SSF50891">
    <property type="entry name" value="Cyclophilin-like"/>
    <property type="match status" value="1"/>
</dbReference>
<proteinExistence type="inferred from homology"/>
<evidence type="ECO:0000250" key="1">
    <source>
        <dbReference type="UniProtKB" id="P75745"/>
    </source>
</evidence>
<evidence type="ECO:0000250" key="2">
    <source>
        <dbReference type="UniProtKB" id="Q7WY77"/>
    </source>
</evidence>
<evidence type="ECO:0000305" key="3"/>